<accession>Q8ZPS4</accession>
<feature type="chain" id="PRO_0000140845" description="Phospho-2-dehydro-3-deoxyheptonate aldolase, Trp-sensitive">
    <location>
        <begin position="1"/>
        <end position="348"/>
    </location>
</feature>
<sequence length="348" mass="38750">MNRTDELRTARIDSLVTPTELAQRYPVSSSVASHVTDSRRRIEKILNGEDPRLLVVIGPCSIHDLNAAMEYATQLQAQRQKHQARLEIVMRTYFEKPRTVVGWKGLISDPDLNGSYRVNYGLELARRLLLQVNELGVPTATEFLDMVTGQFIADLISWGAIGARTTESQIHREMASALSCPVGFKNGTDGNTRIAVDAIRASRASHMFLSPDKDGQMTIYQTSGNPYGHIIMRGGKKPNYHAEDIAAACDTLHEFDLPEHLVVDFSHGNCQKQHRRQLEVCDDICQQIRNGSTAIAGIMAESFLREGTQKIISGQPLIYGQSITDPCLNWEDTEVLLEKLAAAVDSRF</sequence>
<gene>
    <name type="primary">aroH</name>
    <name type="ordered locus">STM1347</name>
</gene>
<reference key="1">
    <citation type="journal article" date="2001" name="Nature">
        <title>Complete genome sequence of Salmonella enterica serovar Typhimurium LT2.</title>
        <authorList>
            <person name="McClelland M."/>
            <person name="Sanderson K.E."/>
            <person name="Spieth J."/>
            <person name="Clifton S.W."/>
            <person name="Latreille P."/>
            <person name="Courtney L."/>
            <person name="Porwollik S."/>
            <person name="Ali J."/>
            <person name="Dante M."/>
            <person name="Du F."/>
            <person name="Hou S."/>
            <person name="Layman D."/>
            <person name="Leonard S."/>
            <person name="Nguyen C."/>
            <person name="Scott K."/>
            <person name="Holmes A."/>
            <person name="Grewal N."/>
            <person name="Mulvaney E."/>
            <person name="Ryan E."/>
            <person name="Sun H."/>
            <person name="Florea L."/>
            <person name="Miller W."/>
            <person name="Stoneking T."/>
            <person name="Nhan M."/>
            <person name="Waterston R."/>
            <person name="Wilson R.K."/>
        </authorList>
    </citation>
    <scope>NUCLEOTIDE SEQUENCE [LARGE SCALE GENOMIC DNA]</scope>
    <source>
        <strain>LT2 / SGSC1412 / ATCC 700720</strain>
    </source>
</reference>
<name>AROH_SALTY</name>
<keyword id="KW-0028">Amino-acid biosynthesis</keyword>
<keyword id="KW-0057">Aromatic amino acid biosynthesis</keyword>
<keyword id="KW-1185">Reference proteome</keyword>
<keyword id="KW-0808">Transferase</keyword>
<evidence type="ECO:0000250" key="1"/>
<evidence type="ECO:0000305" key="2"/>
<protein>
    <recommendedName>
        <fullName>Phospho-2-dehydro-3-deoxyheptonate aldolase, Trp-sensitive</fullName>
        <ecNumber>2.5.1.54</ecNumber>
    </recommendedName>
    <alternativeName>
        <fullName>3-deoxy-D-arabino-heptulosonate 7-phosphate synthase</fullName>
    </alternativeName>
    <alternativeName>
        <fullName>DAHP synthase</fullName>
    </alternativeName>
    <alternativeName>
        <fullName>Phospho-2-keto-3-deoxyheptonate aldolase</fullName>
    </alternativeName>
</protein>
<proteinExistence type="inferred from homology"/>
<dbReference type="EC" id="2.5.1.54"/>
<dbReference type="EMBL" id="AE006468">
    <property type="protein sequence ID" value="AAL20272.1"/>
    <property type="molecule type" value="Genomic_DNA"/>
</dbReference>
<dbReference type="RefSeq" id="NP_460313.1">
    <property type="nucleotide sequence ID" value="NC_003197.2"/>
</dbReference>
<dbReference type="RefSeq" id="WP_001082196.1">
    <property type="nucleotide sequence ID" value="NC_003197.2"/>
</dbReference>
<dbReference type="SMR" id="Q8ZPS4"/>
<dbReference type="STRING" id="99287.STM1347"/>
<dbReference type="PaxDb" id="99287-STM1347"/>
<dbReference type="GeneID" id="1252865"/>
<dbReference type="KEGG" id="stm:STM1347"/>
<dbReference type="PATRIC" id="fig|99287.12.peg.1430"/>
<dbReference type="HOGENOM" id="CLU_030903_0_1_6"/>
<dbReference type="OMA" id="PCLSWED"/>
<dbReference type="PhylomeDB" id="Q8ZPS4"/>
<dbReference type="BioCyc" id="SENT99287:STM1347-MONOMER"/>
<dbReference type="UniPathway" id="UPA00053">
    <property type="reaction ID" value="UER00084"/>
</dbReference>
<dbReference type="Proteomes" id="UP000001014">
    <property type="component" value="Chromosome"/>
</dbReference>
<dbReference type="GO" id="GO:0005737">
    <property type="term" value="C:cytoplasm"/>
    <property type="evidence" value="ECO:0000318"/>
    <property type="project" value="GO_Central"/>
</dbReference>
<dbReference type="GO" id="GO:0003849">
    <property type="term" value="F:3-deoxy-7-phosphoheptulonate synthase activity"/>
    <property type="evidence" value="ECO:0000318"/>
    <property type="project" value="GO_Central"/>
</dbReference>
<dbReference type="GO" id="GO:0008652">
    <property type="term" value="P:amino acid biosynthetic process"/>
    <property type="evidence" value="ECO:0007669"/>
    <property type="project" value="UniProtKB-KW"/>
</dbReference>
<dbReference type="GO" id="GO:0009073">
    <property type="term" value="P:aromatic amino acid family biosynthetic process"/>
    <property type="evidence" value="ECO:0000318"/>
    <property type="project" value="GO_Central"/>
</dbReference>
<dbReference type="GO" id="GO:0009423">
    <property type="term" value="P:chorismate biosynthetic process"/>
    <property type="evidence" value="ECO:0007669"/>
    <property type="project" value="UniProtKB-UniPathway"/>
</dbReference>
<dbReference type="FunFam" id="3.20.20.70:FF:000005">
    <property type="entry name" value="Phospho-2-dehydro-3-deoxyheptonate aldolase"/>
    <property type="match status" value="1"/>
</dbReference>
<dbReference type="Gene3D" id="3.20.20.70">
    <property type="entry name" value="Aldolase class I"/>
    <property type="match status" value="1"/>
</dbReference>
<dbReference type="InterPro" id="IPR013785">
    <property type="entry name" value="Aldolase_TIM"/>
</dbReference>
<dbReference type="InterPro" id="IPR006218">
    <property type="entry name" value="DAHP1/KDSA"/>
</dbReference>
<dbReference type="InterPro" id="IPR006219">
    <property type="entry name" value="DAHP_synth_1"/>
</dbReference>
<dbReference type="NCBIfam" id="TIGR00034">
    <property type="entry name" value="aroFGH"/>
    <property type="match status" value="1"/>
</dbReference>
<dbReference type="NCBIfam" id="NF009395">
    <property type="entry name" value="PRK12755.1"/>
    <property type="match status" value="1"/>
</dbReference>
<dbReference type="NCBIfam" id="NF009396">
    <property type="entry name" value="PRK12756.1"/>
    <property type="match status" value="1"/>
</dbReference>
<dbReference type="PANTHER" id="PTHR21225">
    <property type="entry name" value="PHOSPHO-2-DEHYDRO-3-DEOXYHEPTONATE ALDOLASE DAHP SYNTHETASE"/>
    <property type="match status" value="1"/>
</dbReference>
<dbReference type="PANTHER" id="PTHR21225:SF6">
    <property type="entry name" value="PHOSPHO-2-DEHYDRO-3-DEOXYHEPTONATE ALDOLASE, TRP-SENSITIVE"/>
    <property type="match status" value="1"/>
</dbReference>
<dbReference type="Pfam" id="PF00793">
    <property type="entry name" value="DAHP_synth_1"/>
    <property type="match status" value="1"/>
</dbReference>
<dbReference type="PIRSF" id="PIRSF001361">
    <property type="entry name" value="DAHP_synthase"/>
    <property type="match status" value="1"/>
</dbReference>
<dbReference type="SUPFAM" id="SSF51569">
    <property type="entry name" value="Aldolase"/>
    <property type="match status" value="1"/>
</dbReference>
<comment type="function">
    <text evidence="1">Stereospecific condensation of phosphoenolpyruvate (PEP) and D-erythrose-4-phosphate (E4P) giving rise to 3-deoxy-D-arabino-heptulosonate-7-phosphate (DAHP).</text>
</comment>
<comment type="catalytic activity">
    <reaction>
        <text>D-erythrose 4-phosphate + phosphoenolpyruvate + H2O = 7-phospho-2-dehydro-3-deoxy-D-arabino-heptonate + phosphate</text>
        <dbReference type="Rhea" id="RHEA:14717"/>
        <dbReference type="ChEBI" id="CHEBI:15377"/>
        <dbReference type="ChEBI" id="CHEBI:16897"/>
        <dbReference type="ChEBI" id="CHEBI:43474"/>
        <dbReference type="ChEBI" id="CHEBI:58394"/>
        <dbReference type="ChEBI" id="CHEBI:58702"/>
        <dbReference type="EC" id="2.5.1.54"/>
    </reaction>
</comment>
<comment type="pathway">
    <text>Metabolic intermediate biosynthesis; chorismate biosynthesis; chorismate from D-erythrose 4-phosphate and phosphoenolpyruvate: step 1/7.</text>
</comment>
<comment type="similarity">
    <text evidence="2">Belongs to the class-I DAHP synthase family.</text>
</comment>
<organism>
    <name type="scientific">Salmonella typhimurium (strain LT2 / SGSC1412 / ATCC 700720)</name>
    <dbReference type="NCBI Taxonomy" id="99287"/>
    <lineage>
        <taxon>Bacteria</taxon>
        <taxon>Pseudomonadati</taxon>
        <taxon>Pseudomonadota</taxon>
        <taxon>Gammaproteobacteria</taxon>
        <taxon>Enterobacterales</taxon>
        <taxon>Enterobacteriaceae</taxon>
        <taxon>Salmonella</taxon>
    </lineage>
</organism>